<proteinExistence type="inferred from homology"/>
<feature type="chain" id="PRO_1000189911" description="Co-chaperone protein HscB">
    <location>
        <begin position="1"/>
        <end position="174"/>
    </location>
</feature>
<feature type="domain" description="J" evidence="1">
    <location>
        <begin position="2"/>
        <end position="74"/>
    </location>
</feature>
<evidence type="ECO:0000255" key="1">
    <source>
        <dbReference type="HAMAP-Rule" id="MF_00682"/>
    </source>
</evidence>
<sequence>MNYFTLFDLPRKFNIDKKLLSQNFYKLQLKFHPDLFINDSESKKKIILEKSIQINKGYKTLKNFLNRAIYFLCLNGYEVKKETLLLKNNDFLIRYFSLYEQLDNLKENNFNKKELNNLEQIIQKKIIYCKKKIELEFEKTRYKKVIKIISELLFFEKIKDVLKKEYNIYLRQIN</sequence>
<comment type="function">
    <text evidence="1">Co-chaperone involved in the maturation of iron-sulfur cluster-containing proteins. Seems to help targeting proteins to be folded toward HscA.</text>
</comment>
<comment type="subunit">
    <text evidence="1">Interacts with HscA and stimulates its ATPase activity. Interacts with IscU.</text>
</comment>
<comment type="similarity">
    <text evidence="1">Belongs to the HscB family.</text>
</comment>
<organism>
    <name type="scientific">Buchnera aphidicola subsp. Acyrthosiphon pisum (strain Tuc7)</name>
    <dbReference type="NCBI Taxonomy" id="561501"/>
    <lineage>
        <taxon>Bacteria</taxon>
        <taxon>Pseudomonadati</taxon>
        <taxon>Pseudomonadota</taxon>
        <taxon>Gammaproteobacteria</taxon>
        <taxon>Enterobacterales</taxon>
        <taxon>Erwiniaceae</taxon>
        <taxon>Buchnera</taxon>
    </lineage>
</organism>
<protein>
    <recommendedName>
        <fullName evidence="1">Co-chaperone protein HscB</fullName>
    </recommendedName>
    <alternativeName>
        <fullName evidence="1">Hsc20</fullName>
    </alternativeName>
</protein>
<gene>
    <name evidence="1" type="primary">hscB</name>
    <name type="ordered locus">BUAPTUC7_597</name>
</gene>
<name>HSCB_BUCAT</name>
<dbReference type="EMBL" id="CP001158">
    <property type="protein sequence ID" value="ACL30383.1"/>
    <property type="molecule type" value="Genomic_DNA"/>
</dbReference>
<dbReference type="RefSeq" id="WP_012619596.1">
    <property type="nucleotide sequence ID" value="NC_011834.1"/>
</dbReference>
<dbReference type="SMR" id="B8D8B8"/>
<dbReference type="KEGG" id="bau:BUAPTUC7_597"/>
<dbReference type="HOGENOM" id="CLU_068529_2_0_6"/>
<dbReference type="GO" id="GO:0001671">
    <property type="term" value="F:ATPase activator activity"/>
    <property type="evidence" value="ECO:0007669"/>
    <property type="project" value="InterPro"/>
</dbReference>
<dbReference type="GO" id="GO:0051087">
    <property type="term" value="F:protein-folding chaperone binding"/>
    <property type="evidence" value="ECO:0007669"/>
    <property type="project" value="InterPro"/>
</dbReference>
<dbReference type="GO" id="GO:0044571">
    <property type="term" value="P:[2Fe-2S] cluster assembly"/>
    <property type="evidence" value="ECO:0007669"/>
    <property type="project" value="InterPro"/>
</dbReference>
<dbReference type="GO" id="GO:0051259">
    <property type="term" value="P:protein complex oligomerization"/>
    <property type="evidence" value="ECO:0007669"/>
    <property type="project" value="InterPro"/>
</dbReference>
<dbReference type="GO" id="GO:0006457">
    <property type="term" value="P:protein folding"/>
    <property type="evidence" value="ECO:0007669"/>
    <property type="project" value="UniProtKB-UniRule"/>
</dbReference>
<dbReference type="CDD" id="cd06257">
    <property type="entry name" value="DnaJ"/>
    <property type="match status" value="1"/>
</dbReference>
<dbReference type="Gene3D" id="1.10.287.110">
    <property type="entry name" value="DnaJ domain"/>
    <property type="match status" value="1"/>
</dbReference>
<dbReference type="Gene3D" id="1.20.1280.20">
    <property type="entry name" value="HscB, C-terminal domain"/>
    <property type="match status" value="1"/>
</dbReference>
<dbReference type="HAMAP" id="MF_00682">
    <property type="entry name" value="HscB"/>
    <property type="match status" value="1"/>
</dbReference>
<dbReference type="InterPro" id="IPR001623">
    <property type="entry name" value="DnaJ_domain"/>
</dbReference>
<dbReference type="InterPro" id="IPR004640">
    <property type="entry name" value="HscB"/>
</dbReference>
<dbReference type="InterPro" id="IPR036386">
    <property type="entry name" value="HscB_C_sf"/>
</dbReference>
<dbReference type="InterPro" id="IPR009073">
    <property type="entry name" value="HscB_oligo_C"/>
</dbReference>
<dbReference type="InterPro" id="IPR036869">
    <property type="entry name" value="J_dom_sf"/>
</dbReference>
<dbReference type="NCBIfam" id="TIGR00714">
    <property type="entry name" value="hscB"/>
    <property type="match status" value="1"/>
</dbReference>
<dbReference type="PANTHER" id="PTHR14021">
    <property type="entry name" value="IRON-SULFUR CLUSTER CO-CHAPERONE PROTEIN HSCB"/>
    <property type="match status" value="1"/>
</dbReference>
<dbReference type="PANTHER" id="PTHR14021:SF15">
    <property type="entry name" value="IRON-SULFUR CLUSTER CO-CHAPERONE PROTEIN HSCB"/>
    <property type="match status" value="1"/>
</dbReference>
<dbReference type="Pfam" id="PF07743">
    <property type="entry name" value="HSCB_C"/>
    <property type="match status" value="1"/>
</dbReference>
<dbReference type="SMART" id="SM00271">
    <property type="entry name" value="DnaJ"/>
    <property type="match status" value="1"/>
</dbReference>
<dbReference type="SUPFAM" id="SSF46565">
    <property type="entry name" value="Chaperone J-domain"/>
    <property type="match status" value="1"/>
</dbReference>
<dbReference type="SUPFAM" id="SSF47144">
    <property type="entry name" value="HSC20 (HSCB), C-terminal oligomerisation domain"/>
    <property type="match status" value="1"/>
</dbReference>
<dbReference type="PROSITE" id="PS50076">
    <property type="entry name" value="DNAJ_2"/>
    <property type="match status" value="1"/>
</dbReference>
<keyword id="KW-0143">Chaperone</keyword>
<accession>B8D8B8</accession>
<reference key="1">
    <citation type="journal article" date="2009" name="Science">
        <title>The dynamics and time scale of ongoing genomic erosion in symbiotic bacteria.</title>
        <authorList>
            <person name="Moran N.A."/>
            <person name="McLaughlin H.J."/>
            <person name="Sorek R."/>
        </authorList>
    </citation>
    <scope>NUCLEOTIDE SEQUENCE [LARGE SCALE GENOMIC DNA]</scope>
    <source>
        <strain>Tuc7</strain>
    </source>
</reference>